<accession>A8GT31</accession>
<proteinExistence type="inferred from homology"/>
<protein>
    <recommendedName>
        <fullName evidence="1">Co-chaperonin GroES</fullName>
    </recommendedName>
    <alternativeName>
        <fullName evidence="1">10 kDa chaperonin</fullName>
    </alternativeName>
    <alternativeName>
        <fullName evidence="1">Chaperonin-10</fullName>
        <shortName evidence="1">Cpn10</shortName>
    </alternativeName>
</protein>
<feature type="chain" id="PRO_1000025355" description="Co-chaperonin GroES">
    <location>
        <begin position="1"/>
        <end position="95"/>
    </location>
</feature>
<reference key="1">
    <citation type="submission" date="2007-09" db="EMBL/GenBank/DDBJ databases">
        <title>Complete genome sequence of Rickettsia rickettsii.</title>
        <authorList>
            <person name="Madan A."/>
            <person name="Fahey J."/>
            <person name="Helton E."/>
            <person name="Ketteman M."/>
            <person name="Madan A."/>
            <person name="Rodrigues S."/>
            <person name="Sanchez A."/>
            <person name="Dasch G."/>
            <person name="Eremeeva M."/>
        </authorList>
    </citation>
    <scope>NUCLEOTIDE SEQUENCE [LARGE SCALE GENOMIC DNA]</scope>
    <source>
        <strain>Sheila Smith</strain>
    </source>
</reference>
<dbReference type="EMBL" id="CP000848">
    <property type="protein sequence ID" value="ABV76556.1"/>
    <property type="molecule type" value="Genomic_DNA"/>
</dbReference>
<dbReference type="RefSeq" id="WP_012151121.1">
    <property type="nucleotide sequence ID" value="NZ_CP121767.1"/>
</dbReference>
<dbReference type="SMR" id="A8GT31"/>
<dbReference type="GeneID" id="79937633"/>
<dbReference type="KEGG" id="rri:A1G_05325"/>
<dbReference type="HOGENOM" id="CLU_132825_1_0_5"/>
<dbReference type="Proteomes" id="UP000006832">
    <property type="component" value="Chromosome"/>
</dbReference>
<dbReference type="GO" id="GO:0005737">
    <property type="term" value="C:cytoplasm"/>
    <property type="evidence" value="ECO:0007669"/>
    <property type="project" value="UniProtKB-SubCell"/>
</dbReference>
<dbReference type="GO" id="GO:0005524">
    <property type="term" value="F:ATP binding"/>
    <property type="evidence" value="ECO:0007669"/>
    <property type="project" value="InterPro"/>
</dbReference>
<dbReference type="GO" id="GO:0046872">
    <property type="term" value="F:metal ion binding"/>
    <property type="evidence" value="ECO:0007669"/>
    <property type="project" value="TreeGrafter"/>
</dbReference>
<dbReference type="GO" id="GO:0044183">
    <property type="term" value="F:protein folding chaperone"/>
    <property type="evidence" value="ECO:0007669"/>
    <property type="project" value="InterPro"/>
</dbReference>
<dbReference type="GO" id="GO:0051087">
    <property type="term" value="F:protein-folding chaperone binding"/>
    <property type="evidence" value="ECO:0007669"/>
    <property type="project" value="TreeGrafter"/>
</dbReference>
<dbReference type="GO" id="GO:0051082">
    <property type="term" value="F:unfolded protein binding"/>
    <property type="evidence" value="ECO:0007669"/>
    <property type="project" value="TreeGrafter"/>
</dbReference>
<dbReference type="GO" id="GO:0051085">
    <property type="term" value="P:chaperone cofactor-dependent protein refolding"/>
    <property type="evidence" value="ECO:0007669"/>
    <property type="project" value="TreeGrafter"/>
</dbReference>
<dbReference type="CDD" id="cd00320">
    <property type="entry name" value="cpn10"/>
    <property type="match status" value="1"/>
</dbReference>
<dbReference type="FunFam" id="2.30.33.40:FF:000001">
    <property type="entry name" value="10 kDa chaperonin"/>
    <property type="match status" value="1"/>
</dbReference>
<dbReference type="Gene3D" id="2.30.33.40">
    <property type="entry name" value="GroES chaperonin"/>
    <property type="match status" value="1"/>
</dbReference>
<dbReference type="HAMAP" id="MF_00580">
    <property type="entry name" value="CH10"/>
    <property type="match status" value="1"/>
</dbReference>
<dbReference type="InterPro" id="IPR020818">
    <property type="entry name" value="Chaperonin_GroES"/>
</dbReference>
<dbReference type="InterPro" id="IPR037124">
    <property type="entry name" value="Chaperonin_GroES_sf"/>
</dbReference>
<dbReference type="InterPro" id="IPR018369">
    <property type="entry name" value="Chaprnonin_Cpn10_CS"/>
</dbReference>
<dbReference type="InterPro" id="IPR011032">
    <property type="entry name" value="GroES-like_sf"/>
</dbReference>
<dbReference type="NCBIfam" id="NF001527">
    <property type="entry name" value="PRK00364.1-2"/>
    <property type="match status" value="1"/>
</dbReference>
<dbReference type="NCBIfam" id="NF001529">
    <property type="entry name" value="PRK00364.1-5"/>
    <property type="match status" value="1"/>
</dbReference>
<dbReference type="NCBIfam" id="NF001531">
    <property type="entry name" value="PRK00364.2-2"/>
    <property type="match status" value="1"/>
</dbReference>
<dbReference type="NCBIfam" id="NF001533">
    <property type="entry name" value="PRK00364.2-4"/>
    <property type="match status" value="1"/>
</dbReference>
<dbReference type="PANTHER" id="PTHR10772">
    <property type="entry name" value="10 KDA HEAT SHOCK PROTEIN"/>
    <property type="match status" value="1"/>
</dbReference>
<dbReference type="PANTHER" id="PTHR10772:SF63">
    <property type="entry name" value="20 KDA CHAPERONIN, CHLOROPLASTIC"/>
    <property type="match status" value="1"/>
</dbReference>
<dbReference type="Pfam" id="PF00166">
    <property type="entry name" value="Cpn10"/>
    <property type="match status" value="1"/>
</dbReference>
<dbReference type="PRINTS" id="PR00297">
    <property type="entry name" value="CHAPERONIN10"/>
</dbReference>
<dbReference type="SMART" id="SM00883">
    <property type="entry name" value="Cpn10"/>
    <property type="match status" value="1"/>
</dbReference>
<dbReference type="SUPFAM" id="SSF50129">
    <property type="entry name" value="GroES-like"/>
    <property type="match status" value="1"/>
</dbReference>
<dbReference type="PROSITE" id="PS00681">
    <property type="entry name" value="CHAPERONINS_CPN10"/>
    <property type="match status" value="1"/>
</dbReference>
<evidence type="ECO:0000255" key="1">
    <source>
        <dbReference type="HAMAP-Rule" id="MF_00580"/>
    </source>
</evidence>
<keyword id="KW-0143">Chaperone</keyword>
<keyword id="KW-0963">Cytoplasm</keyword>
<organism>
    <name type="scientific">Rickettsia rickettsii (strain Sheila Smith)</name>
    <dbReference type="NCBI Taxonomy" id="392021"/>
    <lineage>
        <taxon>Bacteria</taxon>
        <taxon>Pseudomonadati</taxon>
        <taxon>Pseudomonadota</taxon>
        <taxon>Alphaproteobacteria</taxon>
        <taxon>Rickettsiales</taxon>
        <taxon>Rickettsiaceae</taxon>
        <taxon>Rickettsieae</taxon>
        <taxon>Rickettsia</taxon>
        <taxon>spotted fever group</taxon>
    </lineage>
</organism>
<comment type="function">
    <text evidence="1">Together with the chaperonin GroEL, plays an essential role in assisting protein folding. The GroEL-GroES system forms a nano-cage that allows encapsulation of the non-native substrate proteins and provides a physical environment optimized to promote and accelerate protein folding. GroES binds to the apical surface of the GroEL ring, thereby capping the opening of the GroEL channel.</text>
</comment>
<comment type="subunit">
    <text evidence="1">Heptamer of 7 subunits arranged in a ring. Interacts with the chaperonin GroEL.</text>
</comment>
<comment type="subcellular location">
    <subcellularLocation>
        <location evidence="1">Cytoplasm</location>
    </subcellularLocation>
</comment>
<comment type="similarity">
    <text evidence="1">Belongs to the GroES chaperonin family.</text>
</comment>
<name>CH10_RICRS</name>
<sequence>MSFKPLHDRIAIKPIEQEEKTKGGIIIPDTVKEKPMQGEVVAVGNGIRNQKGEIHPLELKVGDKVLYGKWAGTEIEIKGTKLIVMKESDVFGIIN</sequence>
<gene>
    <name evidence="1" type="primary">groES</name>
    <name evidence="1" type="synonym">groS</name>
    <name type="ordered locus">A1G_05325</name>
</gene>